<protein>
    <recommendedName>
        <fullName evidence="16">Flavodoxin/ferredoxin--NADP reductase</fullName>
        <ecNumber evidence="3 4 9">1.18.1.2</ecNumber>
        <ecNumber evidence="3 11">1.19.1.1</ecNumber>
    </recommendedName>
    <alternativeName>
        <fullName evidence="12">Ferredoxin (flavodoxin):NADP(+) oxidoreductase</fullName>
    </alternativeName>
    <alternativeName>
        <fullName evidence="14">Ferredoxin--NADP reductase</fullName>
        <shortName evidence="14">FNR</shortName>
    </alternativeName>
    <alternativeName>
        <fullName evidence="16">Flavodoxin--NADP reductase</fullName>
        <shortName evidence="15">FLDR</shortName>
    </alternativeName>
    <alternativeName>
        <fullName evidence="13">Methyl viologen resistance protein A</fullName>
    </alternativeName>
    <alternativeName>
        <fullName evidence="14">dA1</fullName>
    </alternativeName>
</protein>
<dbReference type="EC" id="1.18.1.2" evidence="3 4 9"/>
<dbReference type="EC" id="1.19.1.1" evidence="3 11"/>
<dbReference type="EMBL" id="L04757">
    <property type="protein sequence ID" value="AAA23805.1"/>
    <property type="molecule type" value="Genomic_DNA"/>
</dbReference>
<dbReference type="EMBL" id="L19201">
    <property type="protein sequence ID" value="AAB03056.1"/>
    <property type="molecule type" value="Genomic_DNA"/>
</dbReference>
<dbReference type="EMBL" id="U00096">
    <property type="protein sequence ID" value="AAC76906.1"/>
    <property type="molecule type" value="Genomic_DNA"/>
</dbReference>
<dbReference type="EMBL" id="AP009048">
    <property type="protein sequence ID" value="BAE77386.1"/>
    <property type="molecule type" value="Genomic_DNA"/>
</dbReference>
<dbReference type="EMBL" id="Z11767">
    <property type="status" value="NOT_ANNOTATED_CDS"/>
    <property type="molecule type" value="Genomic_DNA"/>
</dbReference>
<dbReference type="EMBL" id="M19644">
    <property type="protein sequence ID" value="AAA24189.1"/>
    <property type="status" value="ALT_SEQ"/>
    <property type="molecule type" value="Genomic_DNA"/>
</dbReference>
<dbReference type="PIR" id="S40867">
    <property type="entry name" value="S40867"/>
</dbReference>
<dbReference type="RefSeq" id="NP_418359.1">
    <property type="nucleotide sequence ID" value="NC_000913.3"/>
</dbReference>
<dbReference type="RefSeq" id="WP_000796332.1">
    <property type="nucleotide sequence ID" value="NZ_SSZK01000014.1"/>
</dbReference>
<dbReference type="PDB" id="1FDR">
    <property type="method" value="X-ray"/>
    <property type="resolution" value="1.70 A"/>
    <property type="chains" value="A=1-248"/>
</dbReference>
<dbReference type="PDB" id="2XNJ">
    <property type="method" value="X-ray"/>
    <property type="resolution" value="1.90 A"/>
    <property type="chains" value="A/B=2-247"/>
</dbReference>
<dbReference type="PDBsum" id="1FDR"/>
<dbReference type="PDBsum" id="2XNJ"/>
<dbReference type="SMR" id="P28861"/>
<dbReference type="BioGRID" id="4261115">
    <property type="interactions" value="11"/>
</dbReference>
<dbReference type="FunCoup" id="P28861">
    <property type="interactions" value="112"/>
</dbReference>
<dbReference type="IntAct" id="P28861">
    <property type="interactions" value="6"/>
</dbReference>
<dbReference type="STRING" id="511145.b3924"/>
<dbReference type="DrugBank" id="DB03147">
    <property type="generic name" value="Flavin adenine dinucleotide"/>
</dbReference>
<dbReference type="jPOST" id="P28861"/>
<dbReference type="PaxDb" id="511145-b3924"/>
<dbReference type="EnsemblBacteria" id="AAC76906">
    <property type="protein sequence ID" value="AAC76906"/>
    <property type="gene ID" value="b3924"/>
</dbReference>
<dbReference type="GeneID" id="948414"/>
<dbReference type="KEGG" id="ecj:JW3895"/>
<dbReference type="KEGG" id="eco:b3924"/>
<dbReference type="PATRIC" id="fig|1411691.4.peg.2781"/>
<dbReference type="EchoBASE" id="EB1480"/>
<dbReference type="eggNOG" id="COG1018">
    <property type="taxonomic scope" value="Bacteria"/>
</dbReference>
<dbReference type="HOGENOM" id="CLU_003827_3_0_6"/>
<dbReference type="InParanoid" id="P28861"/>
<dbReference type="OMA" id="MTSEHYW"/>
<dbReference type="PhylomeDB" id="P28861"/>
<dbReference type="BioCyc" id="EcoCyc:FLAVONADPREDUCT-MONOMER"/>
<dbReference type="BioCyc" id="MetaCyc:FLAVONADPREDUCT-MONOMER"/>
<dbReference type="BRENDA" id="1.18.1.2">
    <property type="organism ID" value="2026"/>
</dbReference>
<dbReference type="BRENDA" id="1.19.1.1">
    <property type="organism ID" value="2026"/>
</dbReference>
<dbReference type="EvolutionaryTrace" id="P28861"/>
<dbReference type="PRO" id="PR:P28861"/>
<dbReference type="Proteomes" id="UP000000625">
    <property type="component" value="Chromosome"/>
</dbReference>
<dbReference type="GO" id="GO:0005829">
    <property type="term" value="C:cytosol"/>
    <property type="evidence" value="ECO:0000314"/>
    <property type="project" value="EcoCyc"/>
</dbReference>
<dbReference type="GO" id="GO:0071949">
    <property type="term" value="F:FAD binding"/>
    <property type="evidence" value="ECO:0000314"/>
    <property type="project" value="EcoCyc"/>
</dbReference>
<dbReference type="GO" id="GO:0004324">
    <property type="term" value="F:ferredoxin-NADP+ reductase activity"/>
    <property type="evidence" value="ECO:0000314"/>
    <property type="project" value="EcoCyc"/>
</dbReference>
<dbReference type="GO" id="GO:0034599">
    <property type="term" value="P:cellular response to oxidative stress"/>
    <property type="evidence" value="ECO:0000318"/>
    <property type="project" value="GO_Central"/>
</dbReference>
<dbReference type="GO" id="GO:0042167">
    <property type="term" value="P:heme catabolic process"/>
    <property type="evidence" value="ECO:0000318"/>
    <property type="project" value="GO_Central"/>
</dbReference>
<dbReference type="GO" id="GO:0016226">
    <property type="term" value="P:iron-sulfur cluster assembly"/>
    <property type="evidence" value="ECO:0000314"/>
    <property type="project" value="EcoCyc"/>
</dbReference>
<dbReference type="GO" id="GO:0000303">
    <property type="term" value="P:response to superoxide"/>
    <property type="evidence" value="ECO:0000315"/>
    <property type="project" value="EcoCyc"/>
</dbReference>
<dbReference type="GO" id="GO:0009410">
    <property type="term" value="P:response to xenobiotic stimulus"/>
    <property type="evidence" value="ECO:0000315"/>
    <property type="project" value="EcoliWiki"/>
</dbReference>
<dbReference type="CDD" id="cd06195">
    <property type="entry name" value="FNR1"/>
    <property type="match status" value="1"/>
</dbReference>
<dbReference type="FunFam" id="2.40.30.10:FF:000044">
    <property type="entry name" value="Ferredoxin--NADP(+) reductase"/>
    <property type="match status" value="1"/>
</dbReference>
<dbReference type="FunFam" id="3.40.50.80:FF:000013">
    <property type="entry name" value="Ferredoxin--NADP(+) reductase"/>
    <property type="match status" value="1"/>
</dbReference>
<dbReference type="Gene3D" id="3.40.50.80">
    <property type="entry name" value="Nucleotide-binding domain of ferredoxin-NADP reductase (FNR) module"/>
    <property type="match status" value="1"/>
</dbReference>
<dbReference type="Gene3D" id="2.40.30.10">
    <property type="entry name" value="Translation factors"/>
    <property type="match status" value="1"/>
</dbReference>
<dbReference type="InterPro" id="IPR008333">
    <property type="entry name" value="Cbr1-like_FAD-bd_dom"/>
</dbReference>
<dbReference type="InterPro" id="IPR017927">
    <property type="entry name" value="FAD-bd_FR_type"/>
</dbReference>
<dbReference type="InterPro" id="IPR033892">
    <property type="entry name" value="FNR_bac"/>
</dbReference>
<dbReference type="InterPro" id="IPR039261">
    <property type="entry name" value="FNR_nucleotide-bd"/>
</dbReference>
<dbReference type="InterPro" id="IPR051930">
    <property type="entry name" value="FNR_type-1"/>
</dbReference>
<dbReference type="InterPro" id="IPR001433">
    <property type="entry name" value="OxRdtase_FAD/NAD-bd"/>
</dbReference>
<dbReference type="InterPro" id="IPR017938">
    <property type="entry name" value="Riboflavin_synthase-like_b-brl"/>
</dbReference>
<dbReference type="NCBIfam" id="NF008178">
    <property type="entry name" value="PRK10926.1"/>
    <property type="match status" value="1"/>
</dbReference>
<dbReference type="PANTHER" id="PTHR47878:SF1">
    <property type="entry name" value="FLAVODOXIN_FERREDOXIN--NADP REDUCTASE"/>
    <property type="match status" value="1"/>
</dbReference>
<dbReference type="PANTHER" id="PTHR47878">
    <property type="entry name" value="OXIDOREDUCTASE FAD/NAD(P)-BINDING DOMAIN PROTEIN"/>
    <property type="match status" value="1"/>
</dbReference>
<dbReference type="Pfam" id="PF00970">
    <property type="entry name" value="FAD_binding_6"/>
    <property type="match status" value="1"/>
</dbReference>
<dbReference type="Pfam" id="PF00175">
    <property type="entry name" value="NAD_binding_1"/>
    <property type="match status" value="1"/>
</dbReference>
<dbReference type="SUPFAM" id="SSF52343">
    <property type="entry name" value="Ferredoxin reductase-like, C-terminal NADP-linked domain"/>
    <property type="match status" value="1"/>
</dbReference>
<dbReference type="SUPFAM" id="SSF63380">
    <property type="entry name" value="Riboflavin synthase domain-like"/>
    <property type="match status" value="1"/>
</dbReference>
<dbReference type="PROSITE" id="PS51384">
    <property type="entry name" value="FAD_FR"/>
    <property type="match status" value="1"/>
</dbReference>
<reference key="1">
    <citation type="journal article" date="1993" name="J. Bacteriol.">
        <title>Escherichia coli ferredoxin NADP+ reductase: activation of E. coli anaerobic ribonucleotide reduction, cloning of the gene (fpr), and overexpression of the protein.</title>
        <authorList>
            <person name="Bianchi V."/>
            <person name="Reichard P."/>
            <person name="Eliasson R."/>
            <person name="Pontis E."/>
            <person name="Krook M."/>
            <person name="Joernvall H."/>
            <person name="Haggaard-Ljungquist E."/>
        </authorList>
    </citation>
    <scope>NUCLEOTIDE SEQUENCE [GENOMIC DNA]</scope>
    <scope>PROTEIN SEQUENCE OF 2-26</scope>
    <scope>FUNCTION</scope>
    <scope>CATALYTIC ACTIVITY</scope>
    <scope>COFACTOR</scope>
    <source>
        <strain>K12 / C600 / CR34 / ATCC 23724 / DSM 3925 / LMG 3041 / NCIB 10222</strain>
    </source>
</reference>
<reference key="2">
    <citation type="journal article" date="1993" name="Nucleic Acids Res.">
        <title>Analysis of the Escherichia coli genome. III. DNA sequence of the region from 87.2 to 89.2 minutes.</title>
        <authorList>
            <person name="Plunkett G. III"/>
            <person name="Burland V."/>
            <person name="Daniels D.L."/>
            <person name="Blattner F.R."/>
        </authorList>
    </citation>
    <scope>NUCLEOTIDE SEQUENCE [LARGE SCALE GENOMIC DNA]</scope>
    <source>
        <strain>K12 / MG1655 / ATCC 47076</strain>
    </source>
</reference>
<reference key="3">
    <citation type="journal article" date="1997" name="Science">
        <title>The complete genome sequence of Escherichia coli K-12.</title>
        <authorList>
            <person name="Blattner F.R."/>
            <person name="Plunkett G. III"/>
            <person name="Bloch C.A."/>
            <person name="Perna N.T."/>
            <person name="Burland V."/>
            <person name="Riley M."/>
            <person name="Collado-Vides J."/>
            <person name="Glasner J.D."/>
            <person name="Rode C.K."/>
            <person name="Mayhew G.F."/>
            <person name="Gregor J."/>
            <person name="Davis N.W."/>
            <person name="Kirkpatrick H.A."/>
            <person name="Goeden M.A."/>
            <person name="Rose D.J."/>
            <person name="Mau B."/>
            <person name="Shao Y."/>
        </authorList>
    </citation>
    <scope>NUCLEOTIDE SEQUENCE [LARGE SCALE GENOMIC DNA]</scope>
    <source>
        <strain>K12 / MG1655 / ATCC 47076</strain>
    </source>
</reference>
<reference key="4">
    <citation type="journal article" date="2006" name="Mol. Syst. Biol.">
        <title>Highly accurate genome sequences of Escherichia coli K-12 strains MG1655 and W3110.</title>
        <authorList>
            <person name="Hayashi K."/>
            <person name="Morooka N."/>
            <person name="Yamamoto Y."/>
            <person name="Fujita K."/>
            <person name="Isono K."/>
            <person name="Choi S."/>
            <person name="Ohtsubo E."/>
            <person name="Baba T."/>
            <person name="Wanner B.L."/>
            <person name="Mori H."/>
            <person name="Horiuchi T."/>
        </authorList>
    </citation>
    <scope>NUCLEOTIDE SEQUENCE [LARGE SCALE GENOMIC DNA]</scope>
    <source>
        <strain>K12 / W3110 / ATCC 27325 / DSM 5911</strain>
    </source>
</reference>
<reference key="5">
    <citation type="journal article" date="1992" name="J. Bacteriol.">
        <title>Molecular analysis of the glpFKX regions of Escherichia coli and Shigella flexneri.</title>
        <authorList>
            <person name="Truniger V."/>
            <person name="Boos W."/>
            <person name="Sweet G."/>
        </authorList>
    </citation>
    <scope>PRELIMINARY NUCLEOTIDE SEQUENCE [GENOMIC DNA] OF 1-135</scope>
    <source>
        <strain>K12 / MC4100 / ATCC 35695 / DSM 6574</strain>
    </source>
</reference>
<reference key="6">
    <citation type="journal article" date="1988" name="J. Bacteriol.">
        <title>Isolation and characterization of methyl viologen-sensitive mutants of Escherichia coli K-12.</title>
        <authorList>
            <person name="Morimyo M."/>
        </authorList>
    </citation>
    <scope>PRELIMINARY NUCLEOTIDE SEQUENCE [GENOMIC DNA] OF 1-129</scope>
    <scope>DISRUPTION PHENOTYPE</scope>
    <source>
        <strain>K12</strain>
    </source>
</reference>
<reference key="7">
    <citation type="journal article" date="1994" name="J. Biol. Chem.">
        <title>Flavodoxin and NADPH-flavodoxin reductase from Escherichia coli support bovine cytochrome P450c17 hydroxylase activities.</title>
        <authorList>
            <person name="Jenkins C.M."/>
            <person name="Waterman M.R."/>
        </authorList>
    </citation>
    <scope>PROTEIN SEQUENCE OF 2-14</scope>
    <scope>SUBCELLULAR LOCATION</scope>
</reference>
<reference key="8">
    <citation type="journal article" date="1982" name="Eur. J. Biochem.">
        <title>Routes of flavodoxin and ferredoxin reduction in Escherichia coli. CoA-acylating pyruvate: flavodoxin and NADPH: flavodoxin oxidoreductases participating in the activation of pyruvate formate-lyase.</title>
        <authorList>
            <person name="Blaschkowski H.P."/>
            <person name="Neuer G."/>
            <person name="Ludwig-Festl M."/>
            <person name="Knappe J."/>
        </authorList>
    </citation>
    <scope>FUNCTION</scope>
</reference>
<reference key="9">
    <citation type="journal article" date="1993" name="Biochem. Biophys. Res. Commun.">
        <title>Flavodoxin is required for the activation of the anaerobic ribonucleotide reductase.</title>
        <authorList>
            <person name="Bianchi V."/>
            <person name="Eliasson R."/>
            <person name="Fontecave M."/>
            <person name="Mulliez E."/>
            <person name="Hoover D.M."/>
            <person name="Matthews R.G."/>
            <person name="Reichard P."/>
        </authorList>
    </citation>
    <scope>FUNCTION</scope>
</reference>
<reference key="10">
    <citation type="journal article" date="1998" name="Eur. J. Biochem.">
        <title>Characterisation of flavodoxin NADP+ oxidoreductase and flavodoxin; key components of electron transfer in Escherichia coli.</title>
        <authorList>
            <person name="McIver L."/>
            <person name="Leadbeater C."/>
            <person name="Campopiano D.J."/>
            <person name="Baxter R.L."/>
            <person name="Daff S.N."/>
            <person name="Chapman S.K."/>
            <person name="Munro A.W."/>
        </authorList>
    </citation>
    <scope>FUNCTION</scope>
    <scope>CATALYTIC ACTIVITY</scope>
    <scope>BIOPHYSICOCHEMICAL PROPERTIES</scope>
</reference>
<reference key="11">
    <citation type="journal article" date="2000" name="Biochem. J.">
        <title>Probing the NADPH-binding site of Escherichia coli flavodoxin oxidoreductase.</title>
        <authorList>
            <person name="Leadbeater C."/>
            <person name="McIver L."/>
            <person name="Campopiano D.J."/>
            <person name="Webster S.P."/>
            <person name="Baxter R.L."/>
            <person name="Kelly S.M."/>
            <person name="Price N.C."/>
            <person name="Lysek D.A."/>
            <person name="Noble M.A."/>
            <person name="Chapman S.K."/>
            <person name="Munro A.W."/>
        </authorList>
    </citation>
    <scope>BIOPHYSICOCHEMICAL PROPERTIES</scope>
    <scope>MUTAGENESIS OF ARG-144; ARG-174 AND ARG-184</scope>
</reference>
<reference key="12">
    <citation type="journal article" date="2002" name="Arch. Biochem. Biophys.">
        <title>Electron acceptor specificity of ferredoxin (flavodoxin):NADP+ oxidoreductase from Escherichia coli.</title>
        <authorList>
            <person name="Wan J.T."/>
            <person name="Jarrett J.T."/>
        </authorList>
    </citation>
    <scope>FUNCTION</scope>
    <scope>CATALYTIC ACTIVITY</scope>
    <scope>COFACTOR</scope>
    <scope>BIOPHYSICOCHEMICAL PROPERTIES</scope>
</reference>
<reference evidence="17" key="13">
    <citation type="journal article" date="1997" name="J. Mol. Biol.">
        <title>The three-dimensional structure of flavodoxin reductase from Escherichia coli at 1.7-A resolution.</title>
        <authorList>
            <person name="Ingelman M."/>
            <person name="Blanchi V."/>
            <person name="Eklund H."/>
        </authorList>
    </citation>
    <scope>X-RAY CRYSTALLOGRAPHY (1.7 ANGSTROMS) IN COMPLEX WITH FAD</scope>
    <scope>SUBUNIT</scope>
    <scope>MUTAGENESIS OF GLN-126</scope>
    <source>
        <strain>K12 / C600 / CR34 / ATCC 23724 / DSM 3925 / LMG 3041 / NCIB 10222</strain>
    </source>
</reference>
<reference evidence="18" key="14">
    <citation type="journal article" date="2011" name="Biochemistry">
        <title>Swapping FAD binding motifs between plastidic and bacterial ferredoxin-NADP(H) reductases.</title>
        <authorList>
            <person name="Musumeci M.A."/>
            <person name="Botti H."/>
            <person name="Buschiazzo A."/>
            <person name="Ceccarelli E.A."/>
        </authorList>
    </citation>
    <scope>X-RAY CRYSTALLOGRAPHY (1.90 ANGSTROMS) OF 2-247 IN COMPLEX WITH FAD AND NADP</scope>
    <scope>FUNCTION</scope>
    <scope>CATALYTIC ACTIVITY</scope>
    <scope>MUTAGENESIS OF GLN-126</scope>
    <source>
        <strain>K12 / C600 / CR34 / ATCC 23724 / DSM 3925 / LMG 3041 / NCIB 10222</strain>
    </source>
</reference>
<evidence type="ECO:0000255" key="1">
    <source>
        <dbReference type="PROSITE-ProRule" id="PRU00716"/>
    </source>
</evidence>
<evidence type="ECO:0000269" key="2">
    <source>
    </source>
</evidence>
<evidence type="ECO:0000269" key="3">
    <source>
    </source>
</evidence>
<evidence type="ECO:0000269" key="4">
    <source>
    </source>
</evidence>
<evidence type="ECO:0000269" key="5">
    <source>
    </source>
</evidence>
<evidence type="ECO:0000269" key="6">
    <source>
    </source>
</evidence>
<evidence type="ECO:0000269" key="7">
    <source>
    </source>
</evidence>
<evidence type="ECO:0000269" key="8">
    <source>
    </source>
</evidence>
<evidence type="ECO:0000269" key="9">
    <source>
    </source>
</evidence>
<evidence type="ECO:0000269" key="10">
    <source>
    </source>
</evidence>
<evidence type="ECO:0000269" key="11">
    <source>
    </source>
</evidence>
<evidence type="ECO:0000303" key="12">
    <source>
    </source>
</evidence>
<evidence type="ECO:0000303" key="13">
    <source>
    </source>
</evidence>
<evidence type="ECO:0000303" key="14">
    <source>
    </source>
</evidence>
<evidence type="ECO:0000303" key="15">
    <source>
    </source>
</evidence>
<evidence type="ECO:0000305" key="16"/>
<evidence type="ECO:0007744" key="17">
    <source>
        <dbReference type="PDB" id="1FDR"/>
    </source>
</evidence>
<evidence type="ECO:0007744" key="18">
    <source>
        <dbReference type="PDB" id="2XNJ"/>
    </source>
</evidence>
<evidence type="ECO:0007829" key="19">
    <source>
        <dbReference type="PDB" id="1FDR"/>
    </source>
</evidence>
<evidence type="ECO:0007829" key="20">
    <source>
        <dbReference type="PDB" id="2XNJ"/>
    </source>
</evidence>
<proteinExistence type="evidence at protein level"/>
<gene>
    <name evidence="14" type="primary">fpr</name>
    <name evidence="13" type="synonym">mvrA</name>
    <name type="ordered locus">b3924</name>
    <name type="ordered locus">JW3895</name>
</gene>
<comment type="function">
    <text evidence="3 4 6 8 9 11">Transports electrons between flavodoxin or ferredoxin and NADPH (PubMed:12234497, PubMed:21306142, PubMed:8449868, PubMed:9839946). Reduces flavodoxin 1, flavodoxin 2 and ferredoxin, ferredoxin being the kinetically and thermodynamically preferred partner (PubMed:12234497). Required for the activation of several enzymes such as pyruvate formate-lyase, anaerobic ribonucleotide reductase and cobalamin-dependent methionine synthase (PubMed:7042345, PubMed:8267617).</text>
</comment>
<comment type="catalytic activity">
    <reaction evidence="3 4 9">
        <text>2 reduced [2Fe-2S]-[ferredoxin] + NADP(+) + H(+) = 2 oxidized [2Fe-2S]-[ferredoxin] + NADPH</text>
        <dbReference type="Rhea" id="RHEA:20125"/>
        <dbReference type="Rhea" id="RHEA-COMP:10000"/>
        <dbReference type="Rhea" id="RHEA-COMP:10001"/>
        <dbReference type="ChEBI" id="CHEBI:15378"/>
        <dbReference type="ChEBI" id="CHEBI:33737"/>
        <dbReference type="ChEBI" id="CHEBI:33738"/>
        <dbReference type="ChEBI" id="CHEBI:57783"/>
        <dbReference type="ChEBI" id="CHEBI:58349"/>
        <dbReference type="EC" id="1.18.1.2"/>
    </reaction>
</comment>
<comment type="catalytic activity">
    <reaction evidence="3 11">
        <text>reduced [flavodoxin] + NADP(+) = oxidized [flavodoxin] + NADPH + 2 H(+)</text>
        <dbReference type="Rhea" id="RHEA:50756"/>
        <dbReference type="Rhea" id="RHEA-COMP:10622"/>
        <dbReference type="Rhea" id="RHEA-COMP:10623"/>
        <dbReference type="ChEBI" id="CHEBI:15378"/>
        <dbReference type="ChEBI" id="CHEBI:57618"/>
        <dbReference type="ChEBI" id="CHEBI:57783"/>
        <dbReference type="ChEBI" id="CHEBI:58210"/>
        <dbReference type="ChEBI" id="CHEBI:58349"/>
        <dbReference type="EC" id="1.19.1.1"/>
    </reaction>
</comment>
<comment type="cofactor">
    <cofactor evidence="3 9">
        <name>FAD</name>
        <dbReference type="ChEBI" id="CHEBI:57692"/>
    </cofactor>
</comment>
<comment type="biophysicochemical properties">
    <kinetics>
        <KM evidence="11">3.85 uM for NADPH</KM>
        <KM evidence="2">3.9 uM for NADPH</KM>
        <KM evidence="2">2.04 mM for NADH</KM>
        <KM evidence="3">12 uM for ferredoxin</KM>
        <KM evidence="3">7.6 uM for flavodoxin 1</KM>
        <KM evidence="3">4 uM for flavodoxin 2</KM>
        <KM evidence="11">6.84 uM for flavodoxin</KM>
        <KM evidence="11">17.6 uM for cytochrome c</KM>
        <KM evidence="11">23.6 uM for potassium ferricyanide</KM>
        <text evidence="2 3">kcat is 338.9 min(-1) with NADPH as the donor. kcat is 33 min(-1) with NADP as the donor (PubMed:11085917). kcat is 0.15 sec(-1) with ferredoxin as substrate. kcat is 0.0042 sec(-1) with flavodoxin 1 as substrate. kcat is 0.0039 sec(-1) with flavodoxin 2 as substrate (PubMed:12234497).</text>
    </kinetics>
</comment>
<comment type="subunit">
    <text evidence="10">Monomer.</text>
</comment>
<comment type="subcellular location">
    <subcellularLocation>
        <location evidence="7">Cytoplasm</location>
    </subcellularLocation>
</comment>
<comment type="disruption phenotype">
    <text evidence="5">The deletion mutant is highly sensitive to methyl viologen.</text>
</comment>
<comment type="similarity">
    <text evidence="16">Belongs to the ferredoxin--NADP reductase type 1 family.</text>
</comment>
<comment type="caution">
    <text evidence="16">PubMed:2834327 authors incorrectly assigned the protein to be part of FPR, the C-terminal of GlpX.</text>
</comment>
<comment type="sequence caution" evidence="16">
    <conflict type="frameshift">
        <sequence resource="EMBL" id="Z11767"/>
    </conflict>
</comment>
<feature type="initiator methionine" description="Removed" evidence="7 9">
    <location>
        <position position="1"/>
    </location>
</feature>
<feature type="chain" id="PRO_0000167643" description="Flavodoxin/ferredoxin--NADP reductase">
    <location>
        <begin position="2"/>
        <end position="248"/>
    </location>
</feature>
<feature type="domain" description="FAD-binding FR-type" evidence="1">
    <location>
        <begin position="2"/>
        <end position="101"/>
    </location>
</feature>
<feature type="binding site" evidence="4 18">
    <location>
        <position position="17"/>
    </location>
    <ligand>
        <name>NADP(+)</name>
        <dbReference type="ChEBI" id="CHEBI:58349"/>
    </ligand>
</feature>
<feature type="binding site" evidence="4 10 17 18">
    <location>
        <begin position="50"/>
        <end position="53"/>
    </location>
    <ligand>
        <name>FAD</name>
        <dbReference type="ChEBI" id="CHEBI:57692"/>
    </ligand>
</feature>
<feature type="binding site" evidence="4 10 17 18">
    <location>
        <position position="66"/>
    </location>
    <ligand>
        <name>FAD</name>
        <dbReference type="ChEBI" id="CHEBI:57692"/>
    </ligand>
</feature>
<feature type="binding site" evidence="4 10 17 18">
    <location>
        <begin position="74"/>
        <end position="76"/>
    </location>
    <ligand>
        <name>FAD</name>
        <dbReference type="ChEBI" id="CHEBI:57692"/>
    </ligand>
</feature>
<feature type="binding site" evidence="10 17">
    <location>
        <position position="116"/>
    </location>
    <ligand>
        <name>FAD</name>
        <dbReference type="ChEBI" id="CHEBI:57692"/>
    </ligand>
</feature>
<feature type="binding site" evidence="4 18">
    <location>
        <begin position="143"/>
        <end position="144"/>
    </location>
    <ligand>
        <name>NADP(+)</name>
        <dbReference type="ChEBI" id="CHEBI:58349"/>
    </ligand>
</feature>
<feature type="binding site" evidence="4 18">
    <location>
        <begin position="173"/>
        <end position="174"/>
    </location>
    <ligand>
        <name>NADP(+)</name>
        <dbReference type="ChEBI" id="CHEBI:58349"/>
    </ligand>
</feature>
<feature type="binding site" evidence="4 18">
    <location>
        <position position="184"/>
    </location>
    <ligand>
        <name>NADP(+)</name>
        <dbReference type="ChEBI" id="CHEBI:58349"/>
    </ligand>
</feature>
<feature type="binding site" evidence="4 18">
    <location>
        <begin position="214"/>
        <end position="216"/>
    </location>
    <ligand>
        <name>NADP(+)</name>
        <dbReference type="ChEBI" id="CHEBI:58349"/>
    </ligand>
</feature>
<feature type="binding site" evidence="4 18">
    <location>
        <position position="220"/>
    </location>
    <ligand>
        <name>NADP(+)</name>
        <dbReference type="ChEBI" id="CHEBI:58349"/>
    </ligand>
</feature>
<feature type="binding site" evidence="10 17">
    <location>
        <begin position="247"/>
        <end position="248"/>
    </location>
    <ligand>
        <name>FAD</name>
        <dbReference type="ChEBI" id="CHEBI:57692"/>
    </ligand>
</feature>
<feature type="mutagenesis site" description="No change in enzyme activity. Crystallized in 1FDR and 2XNJ." evidence="4 10">
    <original>Q</original>
    <variation>R</variation>
    <location>
        <position position="126"/>
    </location>
</feature>
<feature type="mutagenesis site" description="Increases Km for NADPH. 2-fold decrease in catalytic efficiency." evidence="2">
    <original>R</original>
    <variation>A</variation>
    <location>
        <position position="144"/>
    </location>
</feature>
<feature type="mutagenesis site" description="Increases Km for NADPH. 13-fold decrease in catalytic efficiency." evidence="2">
    <original>R</original>
    <variation>A</variation>
    <location>
        <position position="174"/>
    </location>
</feature>
<feature type="mutagenesis site" description="Increases Km for NADPH. 15-fold decrease in catalytic efficiency." evidence="2">
    <original>R</original>
    <variation>A</variation>
    <location>
        <position position="184"/>
    </location>
</feature>
<feature type="strand" evidence="19">
    <location>
        <begin position="4"/>
        <end position="14"/>
    </location>
</feature>
<feature type="strand" evidence="19">
    <location>
        <begin position="16"/>
        <end position="25"/>
    </location>
</feature>
<feature type="strand" evidence="19">
    <location>
        <begin position="36"/>
        <end position="41"/>
    </location>
</feature>
<feature type="strand" evidence="19">
    <location>
        <begin position="48"/>
        <end position="53"/>
    </location>
</feature>
<feature type="strand" evidence="19">
    <location>
        <begin position="61"/>
        <end position="68"/>
    </location>
</feature>
<feature type="helix" evidence="19">
    <location>
        <begin position="76"/>
        <end position="80"/>
    </location>
</feature>
<feature type="strand" evidence="19">
    <location>
        <begin position="87"/>
        <end position="93"/>
    </location>
</feature>
<feature type="helix" evidence="19">
    <location>
        <begin position="100"/>
        <end position="102"/>
    </location>
</feature>
<feature type="strand" evidence="19">
    <location>
        <begin position="107"/>
        <end position="114"/>
    </location>
</feature>
<feature type="helix" evidence="19">
    <location>
        <begin position="115"/>
        <end position="118"/>
    </location>
</feature>
<feature type="helix" evidence="19">
    <location>
        <begin position="119"/>
        <end position="127"/>
    </location>
</feature>
<feature type="strand" evidence="19">
    <location>
        <begin position="135"/>
        <end position="145"/>
    </location>
</feature>
<feature type="helix" evidence="19">
    <location>
        <begin position="146"/>
        <end position="148"/>
    </location>
</feature>
<feature type="helix" evidence="19">
    <location>
        <begin position="152"/>
        <end position="161"/>
    </location>
</feature>
<feature type="turn" evidence="19">
    <location>
        <begin position="162"/>
        <end position="164"/>
    </location>
</feature>
<feature type="strand" evidence="19">
    <location>
        <begin position="165"/>
        <end position="175"/>
    </location>
</feature>
<feature type="strand" evidence="19">
    <location>
        <begin position="180"/>
        <end position="183"/>
    </location>
</feature>
<feature type="helix" evidence="19">
    <location>
        <begin position="185"/>
        <end position="190"/>
    </location>
</feature>
<feature type="helix" evidence="19">
    <location>
        <begin position="193"/>
        <end position="198"/>
    </location>
</feature>
<feature type="turn" evidence="19">
    <location>
        <begin position="204"/>
        <end position="206"/>
    </location>
</feature>
<feature type="strand" evidence="19">
    <location>
        <begin position="207"/>
        <end position="213"/>
    </location>
</feature>
<feature type="helix" evidence="19">
    <location>
        <begin position="215"/>
        <end position="229"/>
    </location>
</feature>
<feature type="strand" evidence="20">
    <location>
        <begin position="236"/>
        <end position="238"/>
    </location>
</feature>
<feature type="strand" evidence="19">
    <location>
        <begin position="241"/>
        <end position="246"/>
    </location>
</feature>
<accession>P28861</accession>
<accession>P11007</accession>
<accession>Q2M8M0</accession>
<sequence length="248" mass="27751">MADWVTGKVTKVQNWTDALFSLTVHAPVLPFTAGQFTKLGLEIDGERVQRAYSYVNSPDNPDLEFYLVTVPDGKLSPRLAALKPGDEVQVVSEAAGFFVLDEVPHCETLWMLATGTAIGPYLSILQLGKDLDRFKNLVLVHAARYAADLSYLPLMQELEKRYEGKLRIQTVVSRETAAGSLTGRIPALIESGELESTIGLPMNKETSHVMLCGNPQMVRDTQQLLKETRQMTKHLRRRPGHMTAEHYW</sequence>
<name>FENR_ECOLI</name>
<keyword id="KW-0002">3D-structure</keyword>
<keyword id="KW-0963">Cytoplasm</keyword>
<keyword id="KW-0903">Direct protein sequencing</keyword>
<keyword id="KW-0274">FAD</keyword>
<keyword id="KW-0285">Flavoprotein</keyword>
<keyword id="KW-0521">NADP</keyword>
<keyword id="KW-0547">Nucleotide-binding</keyword>
<keyword id="KW-0560">Oxidoreductase</keyword>
<keyword id="KW-1185">Reference proteome</keyword>
<organism>
    <name type="scientific">Escherichia coli (strain K12)</name>
    <dbReference type="NCBI Taxonomy" id="83333"/>
    <lineage>
        <taxon>Bacteria</taxon>
        <taxon>Pseudomonadati</taxon>
        <taxon>Pseudomonadota</taxon>
        <taxon>Gammaproteobacteria</taxon>
        <taxon>Enterobacterales</taxon>
        <taxon>Enterobacteriaceae</taxon>
        <taxon>Escherichia</taxon>
    </lineage>
</organism>